<dbReference type="EMBL" id="AE016830">
    <property type="protein sequence ID" value="AAO82700.1"/>
    <property type="molecule type" value="Genomic_DNA"/>
</dbReference>
<dbReference type="RefSeq" id="NP_816630.1">
    <property type="nucleotide sequence ID" value="NC_004668.1"/>
</dbReference>
<dbReference type="RefSeq" id="WP_002355037.1">
    <property type="nucleotide sequence ID" value="NZ_KE136524.1"/>
</dbReference>
<dbReference type="SMR" id="Q82ZN5"/>
<dbReference type="STRING" id="226185.EF_3015"/>
<dbReference type="EnsemblBacteria" id="AAO82700">
    <property type="protein sequence ID" value="AAO82700"/>
    <property type="gene ID" value="EF_3015"/>
</dbReference>
<dbReference type="GeneID" id="60894916"/>
<dbReference type="KEGG" id="efa:EF3015"/>
<dbReference type="PATRIC" id="fig|226185.45.peg.553"/>
<dbReference type="eggNOG" id="COG3633">
    <property type="taxonomic scope" value="Bacteria"/>
</dbReference>
<dbReference type="HOGENOM" id="CLU_044581_0_0_9"/>
<dbReference type="Proteomes" id="UP000001415">
    <property type="component" value="Chromosome"/>
</dbReference>
<dbReference type="GO" id="GO:0005886">
    <property type="term" value="C:plasma membrane"/>
    <property type="evidence" value="ECO:0007669"/>
    <property type="project" value="UniProtKB-SubCell"/>
</dbReference>
<dbReference type="GO" id="GO:0005295">
    <property type="term" value="F:neutral L-amino acid:sodium symporter activity"/>
    <property type="evidence" value="ECO:0007669"/>
    <property type="project" value="TreeGrafter"/>
</dbReference>
<dbReference type="GO" id="GO:0032329">
    <property type="term" value="P:serine transport"/>
    <property type="evidence" value="ECO:0007669"/>
    <property type="project" value="InterPro"/>
</dbReference>
<dbReference type="GO" id="GO:0015826">
    <property type="term" value="P:threonine transport"/>
    <property type="evidence" value="ECO:0007669"/>
    <property type="project" value="InterPro"/>
</dbReference>
<dbReference type="FunFam" id="1.10.3860.10:FF:000003">
    <property type="entry name" value="Serine/threonine transporter sstT"/>
    <property type="match status" value="1"/>
</dbReference>
<dbReference type="Gene3D" id="1.10.3860.10">
    <property type="entry name" value="Sodium:dicarboxylate symporter"/>
    <property type="match status" value="1"/>
</dbReference>
<dbReference type="HAMAP" id="MF_01582">
    <property type="entry name" value="Ser_Thr_transp_SstT"/>
    <property type="match status" value="1"/>
</dbReference>
<dbReference type="InterPro" id="IPR001991">
    <property type="entry name" value="Na-dicarboxylate_symporter"/>
</dbReference>
<dbReference type="InterPro" id="IPR036458">
    <property type="entry name" value="Na:dicarbo_symporter_sf"/>
</dbReference>
<dbReference type="InterPro" id="IPR023025">
    <property type="entry name" value="Ser_Thr_transp_SstT"/>
</dbReference>
<dbReference type="NCBIfam" id="NF010151">
    <property type="entry name" value="PRK13628.1"/>
    <property type="match status" value="1"/>
</dbReference>
<dbReference type="PANTHER" id="PTHR42865">
    <property type="entry name" value="PROTON/GLUTAMATE-ASPARTATE SYMPORTER"/>
    <property type="match status" value="1"/>
</dbReference>
<dbReference type="PANTHER" id="PTHR42865:SF8">
    <property type="entry name" value="SERINE_THREONINE TRANSPORTER SSTT"/>
    <property type="match status" value="1"/>
</dbReference>
<dbReference type="Pfam" id="PF00375">
    <property type="entry name" value="SDF"/>
    <property type="match status" value="1"/>
</dbReference>
<dbReference type="PRINTS" id="PR00173">
    <property type="entry name" value="EDTRNSPORT"/>
</dbReference>
<dbReference type="SUPFAM" id="SSF118215">
    <property type="entry name" value="Proton glutamate symport protein"/>
    <property type="match status" value="1"/>
</dbReference>
<accession>Q82ZN5</accession>
<protein>
    <recommendedName>
        <fullName evidence="1">Serine/threonine transporter SstT</fullName>
    </recommendedName>
    <alternativeName>
        <fullName evidence="1">Na(+)/serine-threonine symporter</fullName>
    </alternativeName>
</protein>
<evidence type="ECO:0000255" key="1">
    <source>
        <dbReference type="HAMAP-Rule" id="MF_01582"/>
    </source>
</evidence>
<keyword id="KW-0029">Amino-acid transport</keyword>
<keyword id="KW-1003">Cell membrane</keyword>
<keyword id="KW-0472">Membrane</keyword>
<keyword id="KW-1185">Reference proteome</keyword>
<keyword id="KW-0769">Symport</keyword>
<keyword id="KW-0812">Transmembrane</keyword>
<keyword id="KW-1133">Transmembrane helix</keyword>
<keyword id="KW-0813">Transport</keyword>
<reference key="1">
    <citation type="journal article" date="2003" name="Science">
        <title>Role of mobile DNA in the evolution of vancomycin-resistant Enterococcus faecalis.</title>
        <authorList>
            <person name="Paulsen I.T."/>
            <person name="Banerjei L."/>
            <person name="Myers G.S.A."/>
            <person name="Nelson K.E."/>
            <person name="Seshadri R."/>
            <person name="Read T.D."/>
            <person name="Fouts D.E."/>
            <person name="Eisen J.A."/>
            <person name="Gill S.R."/>
            <person name="Heidelberg J.F."/>
            <person name="Tettelin H."/>
            <person name="Dodson R.J."/>
            <person name="Umayam L.A."/>
            <person name="Brinkac L.M."/>
            <person name="Beanan M.J."/>
            <person name="Daugherty S.C."/>
            <person name="DeBoy R.T."/>
            <person name="Durkin S.A."/>
            <person name="Kolonay J.F."/>
            <person name="Madupu R."/>
            <person name="Nelson W.C."/>
            <person name="Vamathevan J.J."/>
            <person name="Tran B."/>
            <person name="Upton J."/>
            <person name="Hansen T."/>
            <person name="Shetty J."/>
            <person name="Khouri H.M."/>
            <person name="Utterback T.R."/>
            <person name="Radune D."/>
            <person name="Ketchum K.A."/>
            <person name="Dougherty B.A."/>
            <person name="Fraser C.M."/>
        </authorList>
    </citation>
    <scope>NUCLEOTIDE SEQUENCE [LARGE SCALE GENOMIC DNA]</scope>
    <source>
        <strain>ATCC 700802 / V583</strain>
    </source>
</reference>
<proteinExistence type="inferred from homology"/>
<feature type="chain" id="PRO_0000309084" description="Serine/threonine transporter SstT">
    <location>
        <begin position="1"/>
        <end position="420"/>
    </location>
</feature>
<feature type="transmembrane region" description="Helical" evidence="1">
    <location>
        <begin position="14"/>
        <end position="34"/>
    </location>
</feature>
<feature type="transmembrane region" description="Helical" evidence="1">
    <location>
        <begin position="40"/>
        <end position="60"/>
    </location>
</feature>
<feature type="transmembrane region" description="Helical" evidence="1">
    <location>
        <begin position="71"/>
        <end position="91"/>
    </location>
</feature>
<feature type="transmembrane region" description="Helical" evidence="1">
    <location>
        <begin position="172"/>
        <end position="192"/>
    </location>
</feature>
<feature type="transmembrane region" description="Helical" evidence="1">
    <location>
        <begin position="210"/>
        <end position="230"/>
    </location>
</feature>
<feature type="transmembrane region" description="Helical" evidence="1">
    <location>
        <begin position="283"/>
        <end position="303"/>
    </location>
</feature>
<feature type="transmembrane region" description="Helical" evidence="1">
    <location>
        <begin position="309"/>
        <end position="329"/>
    </location>
</feature>
<feature type="transmembrane region" description="Helical" evidence="1">
    <location>
        <begin position="332"/>
        <end position="352"/>
    </location>
</feature>
<feature type="transmembrane region" description="Helical" evidence="1">
    <location>
        <begin position="356"/>
        <end position="376"/>
    </location>
</feature>
<comment type="function">
    <text evidence="1">Involved in the import of serine and threonine into the cell, with the concomitant import of sodium (symport system).</text>
</comment>
<comment type="catalytic activity">
    <reaction evidence="1">
        <text>L-serine(in) + Na(+)(in) = L-serine(out) + Na(+)(out)</text>
        <dbReference type="Rhea" id="RHEA:29575"/>
        <dbReference type="ChEBI" id="CHEBI:29101"/>
        <dbReference type="ChEBI" id="CHEBI:33384"/>
    </reaction>
    <physiologicalReaction direction="right-to-left" evidence="1">
        <dbReference type="Rhea" id="RHEA:29577"/>
    </physiologicalReaction>
</comment>
<comment type="catalytic activity">
    <reaction evidence="1">
        <text>L-threonine(in) + Na(+)(in) = L-threonine(out) + Na(+)(out)</text>
        <dbReference type="Rhea" id="RHEA:69999"/>
        <dbReference type="ChEBI" id="CHEBI:29101"/>
        <dbReference type="ChEBI" id="CHEBI:57926"/>
    </reaction>
    <physiologicalReaction direction="right-to-left" evidence="1">
        <dbReference type="Rhea" id="RHEA:70001"/>
    </physiologicalReaction>
</comment>
<comment type="subcellular location">
    <subcellularLocation>
        <location evidence="1">Cell membrane</location>
        <topology evidence="1">Multi-pass membrane protein</topology>
    </subcellularLocation>
</comment>
<comment type="similarity">
    <text evidence="1">Belongs to the dicarboxylate/amino acid:cation symporter (DAACS) (TC 2.A.23) family.</text>
</comment>
<gene>
    <name evidence="1" type="primary">sstT</name>
    <name type="ordered locus">EF_3015</name>
</gene>
<organism>
    <name type="scientific">Enterococcus faecalis (strain ATCC 700802 / V583)</name>
    <dbReference type="NCBI Taxonomy" id="226185"/>
    <lineage>
        <taxon>Bacteria</taxon>
        <taxon>Bacillati</taxon>
        <taxon>Bacillota</taxon>
        <taxon>Bacilli</taxon>
        <taxon>Lactobacillales</taxon>
        <taxon>Enterococcaceae</taxon>
        <taxon>Enterococcus</taxon>
    </lineage>
</organism>
<sequence length="420" mass="43969">MVKAIRKLSLIQKIMIGIVIGTTLGFLVPEWTFISVLGELFVGALKAIAPILVFVLIIASLAQQKAGAKTYVGSILVVYLLATFLAAVVAVTASYLFPVKIVLEAAQEAQAAPTQLSDVLSNVLTSVVQNPIQAMIEGNYLSVLFWSSLIGIGLRQSSVATKDVIANLSTGITTVVQMIIGIAPIGILGLVFHSVATTGIAGLAKYGQLLLLLIGTMAVVALVVYPAIVFWNIRQNPYPLVFFVLKESAIPAFFTRSSAANIPINMELAKAMDLNEESYAVSIPLGATINMGGAAITITIMTLAAVHTLGMSVPIYLALLLSIIAAVSACGASGIAGGSLLLIPLACSLFGISNDIAMQVVGVGFIVGVVQDSIETALNSSSDLLFTTSVELADRRKNGEIIDVKALIGKSQLVVEQENI</sequence>
<name>SSTT_ENTFA</name>